<gene>
    <name type="primary">RhoGAP100F</name>
    <name evidence="9" type="synonym">Syd-1</name>
    <name type="ORF">CG1976</name>
</gene>
<feature type="chain" id="PRO_0000312161" description="Rho GTPase-activating protein 100F">
    <location>
        <begin position="1"/>
        <end position="1866"/>
    </location>
</feature>
<feature type="domain" description="PDZ" evidence="3">
    <location>
        <begin position="179"/>
        <end position="264"/>
    </location>
</feature>
<feature type="domain" description="C2" evidence="2">
    <location>
        <begin position="789"/>
        <end position="908"/>
    </location>
</feature>
<feature type="domain" description="Rho-GAP" evidence="4">
    <location>
        <begin position="948"/>
        <end position="1148"/>
    </location>
</feature>
<feature type="region of interest" description="Disordered" evidence="5">
    <location>
        <begin position="22"/>
        <end position="98"/>
    </location>
</feature>
<feature type="region of interest" description="Disordered" evidence="5">
    <location>
        <begin position="262"/>
        <end position="336"/>
    </location>
</feature>
<feature type="region of interest" description="Disordered" evidence="5">
    <location>
        <begin position="466"/>
        <end position="530"/>
    </location>
</feature>
<feature type="region of interest" description="Disordered" evidence="5">
    <location>
        <begin position="745"/>
        <end position="775"/>
    </location>
</feature>
<feature type="region of interest" description="Disordered" evidence="5">
    <location>
        <begin position="1273"/>
        <end position="1328"/>
    </location>
</feature>
<feature type="region of interest" description="Disordered" evidence="5">
    <location>
        <begin position="1356"/>
        <end position="1380"/>
    </location>
</feature>
<feature type="region of interest" description="Disordered" evidence="5">
    <location>
        <begin position="1393"/>
        <end position="1479"/>
    </location>
</feature>
<feature type="region of interest" description="Disordered" evidence="5">
    <location>
        <begin position="1514"/>
        <end position="1607"/>
    </location>
</feature>
<feature type="region of interest" description="Disordered" evidence="5">
    <location>
        <begin position="1644"/>
        <end position="1727"/>
    </location>
</feature>
<feature type="region of interest" description="Disordered" evidence="5">
    <location>
        <begin position="1819"/>
        <end position="1840"/>
    </location>
</feature>
<feature type="compositionally biased region" description="Low complexity" evidence="5">
    <location>
        <begin position="59"/>
        <end position="77"/>
    </location>
</feature>
<feature type="compositionally biased region" description="Pro residues" evidence="5">
    <location>
        <begin position="271"/>
        <end position="286"/>
    </location>
</feature>
<feature type="compositionally biased region" description="Basic and acidic residues" evidence="5">
    <location>
        <begin position="301"/>
        <end position="326"/>
    </location>
</feature>
<feature type="compositionally biased region" description="Polar residues" evidence="5">
    <location>
        <begin position="750"/>
        <end position="760"/>
    </location>
</feature>
<feature type="compositionally biased region" description="Pro residues" evidence="5">
    <location>
        <begin position="1282"/>
        <end position="1292"/>
    </location>
</feature>
<feature type="compositionally biased region" description="Low complexity" evidence="5">
    <location>
        <begin position="1293"/>
        <end position="1302"/>
    </location>
</feature>
<feature type="compositionally biased region" description="Polar residues" evidence="5">
    <location>
        <begin position="1356"/>
        <end position="1377"/>
    </location>
</feature>
<feature type="compositionally biased region" description="Polar residues" evidence="5">
    <location>
        <begin position="1393"/>
        <end position="1408"/>
    </location>
</feature>
<feature type="compositionally biased region" description="Polar residues" evidence="5">
    <location>
        <begin position="1416"/>
        <end position="1429"/>
    </location>
</feature>
<feature type="compositionally biased region" description="Low complexity" evidence="5">
    <location>
        <begin position="1443"/>
        <end position="1479"/>
    </location>
</feature>
<feature type="compositionally biased region" description="Polar residues" evidence="5">
    <location>
        <begin position="1538"/>
        <end position="1587"/>
    </location>
</feature>
<feature type="compositionally biased region" description="Low complexity" evidence="5">
    <location>
        <begin position="1590"/>
        <end position="1607"/>
    </location>
</feature>
<feature type="compositionally biased region" description="Low complexity" evidence="5">
    <location>
        <begin position="1644"/>
        <end position="1658"/>
    </location>
</feature>
<feature type="compositionally biased region" description="Gly residues" evidence="5">
    <location>
        <begin position="1659"/>
        <end position="1670"/>
    </location>
</feature>
<feature type="compositionally biased region" description="Low complexity" evidence="5">
    <location>
        <begin position="1671"/>
        <end position="1688"/>
    </location>
</feature>
<feature type="compositionally biased region" description="Low complexity" evidence="5">
    <location>
        <begin position="1696"/>
        <end position="1720"/>
    </location>
</feature>
<feature type="compositionally biased region" description="Basic and acidic residues" evidence="5">
    <location>
        <begin position="1830"/>
        <end position="1839"/>
    </location>
</feature>
<feature type="site" description="Arginine finger; crucial for GTP hydrolysis by stabilizing the transition state" evidence="4">
    <location>
        <position position="990"/>
    </location>
</feature>
<feature type="modified residue" description="Phosphoserine" evidence="6">
    <location>
        <position position="719"/>
    </location>
</feature>
<feature type="splice variant" id="VSP_041784" description="In isoform C." evidence="10">
    <original>MQWKKKFTRLKAATGNSRVRRMLCCGR</original>
    <variation>MCDSATTGCFLTRSSH</variation>
    <location>
        <begin position="1"/>
        <end position="27"/>
    </location>
</feature>
<feature type="splice variant" id="VSP_041785" description="In isoform B." evidence="8">
    <original>RRGESTG</original>
    <variation>NVLPASD</variation>
    <location>
        <begin position="1185"/>
        <end position="1191"/>
    </location>
</feature>
<feature type="splice variant" id="VSP_041786" description="In isoform B." evidence="8">
    <location>
        <begin position="1192"/>
        <end position="1866"/>
    </location>
</feature>
<feature type="mutagenesis site" description="Reduced interaction with Nrx-1." evidence="7">
    <original>R</original>
    <variation>A</variation>
    <location>
        <position position="185"/>
    </location>
</feature>
<feature type="mutagenesis site" description="Reduced interaction with Nrx-1." evidence="7">
    <original>L</original>
    <variation>A</variation>
    <location>
        <position position="190"/>
    </location>
</feature>
<dbReference type="EMBL" id="AE014297">
    <property type="protein sequence ID" value="AAF57207.2"/>
    <property type="molecule type" value="Genomic_DNA"/>
</dbReference>
<dbReference type="EMBL" id="AE014297">
    <property type="protein sequence ID" value="ACZ95078.1"/>
    <property type="molecule type" value="Genomic_DNA"/>
</dbReference>
<dbReference type="EMBL" id="AE014297">
    <property type="protein sequence ID" value="ACZ95079.1"/>
    <property type="molecule type" value="Genomic_DNA"/>
</dbReference>
<dbReference type="EMBL" id="BT082117">
    <property type="protein sequence ID" value="ACQ45355.1"/>
    <property type="molecule type" value="mRNA"/>
</dbReference>
<dbReference type="EMBL" id="AY095038">
    <property type="protein sequence ID" value="AAM11366.1"/>
    <property type="status" value="ALT_INIT"/>
    <property type="molecule type" value="mRNA"/>
</dbReference>
<dbReference type="RefSeq" id="NP_001163785.1">
    <molecule id="Q9V9S7-3"/>
    <property type="nucleotide sequence ID" value="NM_001170314.2"/>
</dbReference>
<dbReference type="RefSeq" id="NP_001163786.1">
    <molecule id="Q9V9S7-1"/>
    <property type="nucleotide sequence ID" value="NM_001170315.3"/>
</dbReference>
<dbReference type="RefSeq" id="NP_651902.2">
    <molecule id="Q9V9S7-2"/>
    <property type="nucleotide sequence ID" value="NM_143645.2"/>
</dbReference>
<dbReference type="SMR" id="Q9V9S7"/>
<dbReference type="BioGRID" id="68599">
    <property type="interactions" value="13"/>
</dbReference>
<dbReference type="FunCoup" id="Q9V9S7">
    <property type="interactions" value="21"/>
</dbReference>
<dbReference type="IntAct" id="Q9V9S7">
    <property type="interactions" value="3"/>
</dbReference>
<dbReference type="STRING" id="7227.FBpp0291391"/>
<dbReference type="GlyGen" id="Q9V9S7">
    <property type="glycosylation" value="3 sites, 1 O-linked glycan (1 site)"/>
</dbReference>
<dbReference type="iPTMnet" id="Q9V9S7"/>
<dbReference type="PaxDb" id="7227-FBpp0291391"/>
<dbReference type="DNASU" id="43758"/>
<dbReference type="EnsemblMetazoa" id="FBtr0302179">
    <molecule id="Q9V9S7-3"/>
    <property type="protein sequence ID" value="FBpp0291389"/>
    <property type="gene ID" value="FBgn0039883"/>
</dbReference>
<dbReference type="EnsemblMetazoa" id="FBtr0302180">
    <molecule id="Q9V9S7-2"/>
    <property type="protein sequence ID" value="FBpp0291390"/>
    <property type="gene ID" value="FBgn0039883"/>
</dbReference>
<dbReference type="EnsemblMetazoa" id="FBtr0302181">
    <molecule id="Q9V9S7-1"/>
    <property type="protein sequence ID" value="FBpp0291391"/>
    <property type="gene ID" value="FBgn0039883"/>
</dbReference>
<dbReference type="GeneID" id="43758"/>
<dbReference type="KEGG" id="dme:Dmel_CG1976"/>
<dbReference type="UCSC" id="CG1976-RA">
    <molecule id="Q9V9S7-1"/>
    <property type="organism name" value="d. melanogaster"/>
</dbReference>
<dbReference type="AGR" id="FB:FBgn0039883"/>
<dbReference type="CTD" id="43758"/>
<dbReference type="FlyBase" id="FBgn0039883">
    <property type="gene designation" value="RhoGAP100F"/>
</dbReference>
<dbReference type="VEuPathDB" id="VectorBase:FBgn0039883"/>
<dbReference type="eggNOG" id="KOG1452">
    <property type="taxonomic scope" value="Eukaryota"/>
</dbReference>
<dbReference type="GeneTree" id="ENSGT01030000234635"/>
<dbReference type="InParanoid" id="Q9V9S7"/>
<dbReference type="OMA" id="YDTHKAQ"/>
<dbReference type="OrthoDB" id="120383at2759"/>
<dbReference type="PhylomeDB" id="Q9V9S7"/>
<dbReference type="Reactome" id="R-DME-9013148">
    <property type="pathway name" value="CDC42 GTPase cycle"/>
</dbReference>
<dbReference type="Reactome" id="R-DME-9013149">
    <property type="pathway name" value="RAC1 GTPase cycle"/>
</dbReference>
<dbReference type="Reactome" id="R-DME-9013404">
    <property type="pathway name" value="RAC2 GTPase cycle"/>
</dbReference>
<dbReference type="Reactome" id="R-DME-9013406">
    <property type="pathway name" value="RHOQ GTPase cycle"/>
</dbReference>
<dbReference type="Reactome" id="R-DME-9013409">
    <property type="pathway name" value="RHOJ GTPase cycle"/>
</dbReference>
<dbReference type="Reactome" id="R-DME-9013423">
    <property type="pathway name" value="RAC3 GTPase cycle"/>
</dbReference>
<dbReference type="Reactome" id="R-DME-9035034">
    <property type="pathway name" value="RHOF GTPase cycle"/>
</dbReference>
<dbReference type="BioGRID-ORCS" id="43758">
    <property type="hits" value="0 hits in 3 CRISPR screens"/>
</dbReference>
<dbReference type="ChiTaRS" id="RhoGAP100F">
    <property type="organism name" value="fly"/>
</dbReference>
<dbReference type="GenomeRNAi" id="43758"/>
<dbReference type="PRO" id="PR:Q9V9S7"/>
<dbReference type="Proteomes" id="UP000000803">
    <property type="component" value="Chromosome 3R"/>
</dbReference>
<dbReference type="Bgee" id="FBgn0039883">
    <property type="expression patterns" value="Expressed in distal medullary amacrine neuron Dm11 in insect head and 193 other cell types or tissues"/>
</dbReference>
<dbReference type="ExpressionAtlas" id="Q9V9S7">
    <property type="expression patterns" value="baseline and differential"/>
</dbReference>
<dbReference type="GO" id="GO:0042995">
    <property type="term" value="C:cell projection"/>
    <property type="evidence" value="ECO:0007669"/>
    <property type="project" value="UniProtKB-KW"/>
</dbReference>
<dbReference type="GO" id="GO:0031594">
    <property type="term" value="C:neuromuscular junction"/>
    <property type="evidence" value="ECO:0000314"/>
    <property type="project" value="SynGO"/>
</dbReference>
<dbReference type="GO" id="GO:0048786">
    <property type="term" value="C:presynaptic active zone"/>
    <property type="evidence" value="ECO:0000314"/>
    <property type="project" value="FlyBase"/>
</dbReference>
<dbReference type="GO" id="GO:0098831">
    <property type="term" value="C:presynaptic active zone cytoplasmic component"/>
    <property type="evidence" value="ECO:0000314"/>
    <property type="project" value="SynGO"/>
</dbReference>
<dbReference type="GO" id="GO:0097060">
    <property type="term" value="C:synaptic membrane"/>
    <property type="evidence" value="ECO:0000318"/>
    <property type="project" value="GO_Central"/>
</dbReference>
<dbReference type="GO" id="GO:0005096">
    <property type="term" value="F:GTPase activator activity"/>
    <property type="evidence" value="ECO:0000250"/>
    <property type="project" value="UniProtKB"/>
</dbReference>
<dbReference type="GO" id="GO:0090630">
    <property type="term" value="P:activation of GTPase activity"/>
    <property type="evidence" value="ECO:0000250"/>
    <property type="project" value="UniProtKB"/>
</dbReference>
<dbReference type="GO" id="GO:0048846">
    <property type="term" value="P:axon extension involved in axon guidance"/>
    <property type="evidence" value="ECO:0000315"/>
    <property type="project" value="FlyBase"/>
</dbReference>
<dbReference type="GO" id="GO:0016477">
    <property type="term" value="P:cell migration"/>
    <property type="evidence" value="ECO:0000318"/>
    <property type="project" value="GO_Central"/>
</dbReference>
<dbReference type="GO" id="GO:0030030">
    <property type="term" value="P:cell projection organization"/>
    <property type="evidence" value="ECO:0000318"/>
    <property type="project" value="GO_Central"/>
</dbReference>
<dbReference type="GO" id="GO:0048789">
    <property type="term" value="P:cytoskeletal matrix organization at active zone"/>
    <property type="evidence" value="ECO:0000315"/>
    <property type="project" value="FlyBase"/>
</dbReference>
<dbReference type="GO" id="GO:0048790">
    <property type="term" value="P:maintenance of presynaptic active zone structure"/>
    <property type="evidence" value="ECO:0000315"/>
    <property type="project" value="FlyBase"/>
</dbReference>
<dbReference type="GO" id="GO:1990709">
    <property type="term" value="P:presynaptic active zone organization"/>
    <property type="evidence" value="ECO:0000315"/>
    <property type="project" value="FlyBase"/>
</dbReference>
<dbReference type="GO" id="GO:0045467">
    <property type="term" value="P:R7 cell development"/>
    <property type="evidence" value="ECO:0000315"/>
    <property type="project" value="FlyBase"/>
</dbReference>
<dbReference type="GO" id="GO:0046578">
    <property type="term" value="P:regulation of Ras protein signal transduction"/>
    <property type="evidence" value="ECO:0000318"/>
    <property type="project" value="GO_Central"/>
</dbReference>
<dbReference type="GO" id="GO:0007266">
    <property type="term" value="P:Rho protein signal transduction"/>
    <property type="evidence" value="ECO:0000255"/>
    <property type="project" value="FlyBase"/>
</dbReference>
<dbReference type="GO" id="GO:0007416">
    <property type="term" value="P:synapse assembly"/>
    <property type="evidence" value="ECO:0000314"/>
    <property type="project" value="SynGO"/>
</dbReference>
<dbReference type="GO" id="GO:0097479">
    <property type="term" value="P:synaptic vesicle localization"/>
    <property type="evidence" value="ECO:0000315"/>
    <property type="project" value="FlyBase"/>
</dbReference>
<dbReference type="CDD" id="cd00030">
    <property type="entry name" value="C2"/>
    <property type="match status" value="1"/>
</dbReference>
<dbReference type="CDD" id="cd06718">
    <property type="entry name" value="PDZ_Par6-like"/>
    <property type="match status" value="1"/>
</dbReference>
<dbReference type="CDD" id="cd04379">
    <property type="entry name" value="RhoGAP_SYD1"/>
    <property type="match status" value="1"/>
</dbReference>
<dbReference type="FunFam" id="2.30.42.10:FF:000163">
    <property type="entry name" value="rho GTPase-activating protein 100F isoform X1"/>
    <property type="match status" value="1"/>
</dbReference>
<dbReference type="FunFam" id="1.10.555.10:FF:000031">
    <property type="entry name" value="rho GTPase-activating protein 100F isoform X6"/>
    <property type="match status" value="1"/>
</dbReference>
<dbReference type="FunFam" id="2.60.40.150:FF:000165">
    <property type="entry name" value="rho GTPase-activating protein 100F isoform X6"/>
    <property type="match status" value="1"/>
</dbReference>
<dbReference type="Gene3D" id="2.30.42.10">
    <property type="match status" value="1"/>
</dbReference>
<dbReference type="Gene3D" id="2.60.40.150">
    <property type="entry name" value="C2 domain"/>
    <property type="match status" value="1"/>
</dbReference>
<dbReference type="Gene3D" id="1.10.555.10">
    <property type="entry name" value="Rho GTPase activation protein"/>
    <property type="match status" value="1"/>
</dbReference>
<dbReference type="InterPro" id="IPR000008">
    <property type="entry name" value="C2_dom"/>
</dbReference>
<dbReference type="InterPro" id="IPR035892">
    <property type="entry name" value="C2_domain_sf"/>
</dbReference>
<dbReference type="InterPro" id="IPR001478">
    <property type="entry name" value="PDZ"/>
</dbReference>
<dbReference type="InterPro" id="IPR036034">
    <property type="entry name" value="PDZ_sf"/>
</dbReference>
<dbReference type="InterPro" id="IPR052118">
    <property type="entry name" value="Rho-GAP_regulator"/>
</dbReference>
<dbReference type="InterPro" id="IPR008936">
    <property type="entry name" value="Rho_GTPase_activation_prot"/>
</dbReference>
<dbReference type="InterPro" id="IPR000198">
    <property type="entry name" value="RhoGAP_dom"/>
</dbReference>
<dbReference type="PANTHER" id="PTHR46150">
    <property type="entry name" value="RHO GTPASE-ACTIVATING PROTEIN 100F"/>
    <property type="match status" value="1"/>
</dbReference>
<dbReference type="PANTHER" id="PTHR46150:SF3">
    <property type="entry name" value="RHO GTPASE-ACTIVATING PROTEIN 100F"/>
    <property type="match status" value="1"/>
</dbReference>
<dbReference type="Pfam" id="PF25336">
    <property type="entry name" value="C2_SYDE"/>
    <property type="match status" value="1"/>
</dbReference>
<dbReference type="Pfam" id="PF00595">
    <property type="entry name" value="PDZ"/>
    <property type="match status" value="1"/>
</dbReference>
<dbReference type="Pfam" id="PF00620">
    <property type="entry name" value="RhoGAP"/>
    <property type="match status" value="1"/>
</dbReference>
<dbReference type="SMART" id="SM00239">
    <property type="entry name" value="C2"/>
    <property type="match status" value="1"/>
</dbReference>
<dbReference type="SMART" id="SM00228">
    <property type="entry name" value="PDZ"/>
    <property type="match status" value="1"/>
</dbReference>
<dbReference type="SMART" id="SM00324">
    <property type="entry name" value="RhoGAP"/>
    <property type="match status" value="1"/>
</dbReference>
<dbReference type="SUPFAM" id="SSF49562">
    <property type="entry name" value="C2 domain (Calcium/lipid-binding domain, CaLB)"/>
    <property type="match status" value="1"/>
</dbReference>
<dbReference type="SUPFAM" id="SSF48350">
    <property type="entry name" value="GTPase activation domain, GAP"/>
    <property type="match status" value="1"/>
</dbReference>
<dbReference type="SUPFAM" id="SSF50156">
    <property type="entry name" value="PDZ domain-like"/>
    <property type="match status" value="1"/>
</dbReference>
<dbReference type="PROSITE" id="PS50004">
    <property type="entry name" value="C2"/>
    <property type="match status" value="1"/>
</dbReference>
<dbReference type="PROSITE" id="PS50106">
    <property type="entry name" value="PDZ"/>
    <property type="match status" value="1"/>
</dbReference>
<dbReference type="PROSITE" id="PS50238">
    <property type="entry name" value="RHOGAP"/>
    <property type="match status" value="1"/>
</dbReference>
<name>SYDE_DROME</name>
<organism>
    <name type="scientific">Drosophila melanogaster</name>
    <name type="common">Fruit fly</name>
    <dbReference type="NCBI Taxonomy" id="7227"/>
    <lineage>
        <taxon>Eukaryota</taxon>
        <taxon>Metazoa</taxon>
        <taxon>Ecdysozoa</taxon>
        <taxon>Arthropoda</taxon>
        <taxon>Hexapoda</taxon>
        <taxon>Insecta</taxon>
        <taxon>Pterygota</taxon>
        <taxon>Neoptera</taxon>
        <taxon>Endopterygota</taxon>
        <taxon>Diptera</taxon>
        <taxon>Brachycera</taxon>
        <taxon>Muscomorpha</taxon>
        <taxon>Ephydroidea</taxon>
        <taxon>Drosophilidae</taxon>
        <taxon>Drosophila</taxon>
        <taxon>Sophophora</taxon>
    </lineage>
</organism>
<evidence type="ECO:0000250" key="1">
    <source>
        <dbReference type="UniProtKB" id="Q86NH1"/>
    </source>
</evidence>
<evidence type="ECO:0000255" key="2">
    <source>
        <dbReference type="PROSITE-ProRule" id="PRU00041"/>
    </source>
</evidence>
<evidence type="ECO:0000255" key="3">
    <source>
        <dbReference type="PROSITE-ProRule" id="PRU00143"/>
    </source>
</evidence>
<evidence type="ECO:0000255" key="4">
    <source>
        <dbReference type="PROSITE-ProRule" id="PRU00172"/>
    </source>
</evidence>
<evidence type="ECO:0000256" key="5">
    <source>
        <dbReference type="SAM" id="MobiDB-lite"/>
    </source>
</evidence>
<evidence type="ECO:0000269" key="6">
    <source>
    </source>
</evidence>
<evidence type="ECO:0000269" key="7">
    <source>
    </source>
</evidence>
<evidence type="ECO:0000303" key="8">
    <source>
    </source>
</evidence>
<evidence type="ECO:0000303" key="9">
    <source>
    </source>
</evidence>
<evidence type="ECO:0000305" key="10"/>
<comment type="function">
    <text evidence="1 7">GTPase activator for the Rho-type GTPases by converting them to an inactive GDP-bound state (By similarity). Promotes the anchoring of Liprin-alpha clusters at synapses (PubMed:22864612). Recruits and keeps Nrx-1 levels high in active zones in the presynapse opposite the postsynaptic region (PubMed:22864612).</text>
</comment>
<comment type="subunit">
    <text evidence="7">Interacts (via PDZ domain) with Nrx-1; may recruit Nrx-1 to the presynaptic active zone.</text>
</comment>
<comment type="subcellular location">
    <subcellularLocation>
        <location evidence="7">Presynapse</location>
    </subcellularLocation>
    <text evidence="7">Localized in the active zone of the presynapse.</text>
</comment>
<comment type="alternative products">
    <event type="alternative splicing"/>
    <isoform>
        <id>Q9V9S7-1</id>
        <name>D</name>
        <sequence type="displayed"/>
    </isoform>
    <isoform>
        <id>Q9V9S7-2</id>
        <name>C</name>
        <sequence type="described" ref="VSP_041784"/>
    </isoform>
    <isoform>
        <id>Q9V9S7-3</id>
        <name>B</name>
        <sequence type="described" ref="VSP_041785 VSP_041786"/>
    </isoform>
</comment>
<comment type="disruption phenotype">
    <text evidence="7">Reduced synpatic bouton numbers in neuromuscular junctions (NMJs) (PubMed:22864612). Defects in the organization of the remaining active zones in NMJs (PubMed:22864612). Reduced Nrx-1 and Nlg-1 levels at presynapse (PubMed:22864612). Deficit in early GluRIIA incorporation in postsynpase assembly (PubMed:22864612).</text>
</comment>
<comment type="sequence caution" evidence="10">
    <conflict type="erroneous initiation">
        <sequence resource="EMBL-CDS" id="AAM11366"/>
    </conflict>
    <text>Truncated N-terminus.</text>
</comment>
<proteinExistence type="evidence at protein level"/>
<keyword id="KW-0025">Alternative splicing</keyword>
<keyword id="KW-0966">Cell projection</keyword>
<keyword id="KW-0343">GTPase activation</keyword>
<keyword id="KW-0597">Phosphoprotein</keyword>
<keyword id="KW-1185">Reference proteome</keyword>
<keyword id="KW-0770">Synapse</keyword>
<reference key="1">
    <citation type="journal article" date="2000" name="Science">
        <title>The genome sequence of Drosophila melanogaster.</title>
        <authorList>
            <person name="Adams M.D."/>
            <person name="Celniker S.E."/>
            <person name="Holt R.A."/>
            <person name="Evans C.A."/>
            <person name="Gocayne J.D."/>
            <person name="Amanatides P.G."/>
            <person name="Scherer S.E."/>
            <person name="Li P.W."/>
            <person name="Hoskins R.A."/>
            <person name="Galle R.F."/>
            <person name="George R.A."/>
            <person name="Lewis S.E."/>
            <person name="Richards S."/>
            <person name="Ashburner M."/>
            <person name="Henderson S.N."/>
            <person name="Sutton G.G."/>
            <person name="Wortman J.R."/>
            <person name="Yandell M.D."/>
            <person name="Zhang Q."/>
            <person name="Chen L.X."/>
            <person name="Brandon R.C."/>
            <person name="Rogers Y.-H.C."/>
            <person name="Blazej R.G."/>
            <person name="Champe M."/>
            <person name="Pfeiffer B.D."/>
            <person name="Wan K.H."/>
            <person name="Doyle C."/>
            <person name="Baxter E.G."/>
            <person name="Helt G."/>
            <person name="Nelson C.R."/>
            <person name="Miklos G.L.G."/>
            <person name="Abril J.F."/>
            <person name="Agbayani A."/>
            <person name="An H.-J."/>
            <person name="Andrews-Pfannkoch C."/>
            <person name="Baldwin D."/>
            <person name="Ballew R.M."/>
            <person name="Basu A."/>
            <person name="Baxendale J."/>
            <person name="Bayraktaroglu L."/>
            <person name="Beasley E.M."/>
            <person name="Beeson K.Y."/>
            <person name="Benos P.V."/>
            <person name="Berman B.P."/>
            <person name="Bhandari D."/>
            <person name="Bolshakov S."/>
            <person name="Borkova D."/>
            <person name="Botchan M.R."/>
            <person name="Bouck J."/>
            <person name="Brokstein P."/>
            <person name="Brottier P."/>
            <person name="Burtis K.C."/>
            <person name="Busam D.A."/>
            <person name="Butler H."/>
            <person name="Cadieu E."/>
            <person name="Center A."/>
            <person name="Chandra I."/>
            <person name="Cherry J.M."/>
            <person name="Cawley S."/>
            <person name="Dahlke C."/>
            <person name="Davenport L.B."/>
            <person name="Davies P."/>
            <person name="de Pablos B."/>
            <person name="Delcher A."/>
            <person name="Deng Z."/>
            <person name="Mays A.D."/>
            <person name="Dew I."/>
            <person name="Dietz S.M."/>
            <person name="Dodson K."/>
            <person name="Doup L.E."/>
            <person name="Downes M."/>
            <person name="Dugan-Rocha S."/>
            <person name="Dunkov B.C."/>
            <person name="Dunn P."/>
            <person name="Durbin K.J."/>
            <person name="Evangelista C.C."/>
            <person name="Ferraz C."/>
            <person name="Ferriera S."/>
            <person name="Fleischmann W."/>
            <person name="Fosler C."/>
            <person name="Gabrielian A.E."/>
            <person name="Garg N.S."/>
            <person name="Gelbart W.M."/>
            <person name="Glasser K."/>
            <person name="Glodek A."/>
            <person name="Gong F."/>
            <person name="Gorrell J.H."/>
            <person name="Gu Z."/>
            <person name="Guan P."/>
            <person name="Harris M."/>
            <person name="Harris N.L."/>
            <person name="Harvey D.A."/>
            <person name="Heiman T.J."/>
            <person name="Hernandez J.R."/>
            <person name="Houck J."/>
            <person name="Hostin D."/>
            <person name="Houston K.A."/>
            <person name="Howland T.J."/>
            <person name="Wei M.-H."/>
            <person name="Ibegwam C."/>
            <person name="Jalali M."/>
            <person name="Kalush F."/>
            <person name="Karpen G.H."/>
            <person name="Ke Z."/>
            <person name="Kennison J.A."/>
            <person name="Ketchum K.A."/>
            <person name="Kimmel B.E."/>
            <person name="Kodira C.D."/>
            <person name="Kraft C.L."/>
            <person name="Kravitz S."/>
            <person name="Kulp D."/>
            <person name="Lai Z."/>
            <person name="Lasko P."/>
            <person name="Lei Y."/>
            <person name="Levitsky A.A."/>
            <person name="Li J.H."/>
            <person name="Li Z."/>
            <person name="Liang Y."/>
            <person name="Lin X."/>
            <person name="Liu X."/>
            <person name="Mattei B."/>
            <person name="McIntosh T.C."/>
            <person name="McLeod M.P."/>
            <person name="McPherson D."/>
            <person name="Merkulov G."/>
            <person name="Milshina N.V."/>
            <person name="Mobarry C."/>
            <person name="Morris J."/>
            <person name="Moshrefi A."/>
            <person name="Mount S.M."/>
            <person name="Moy M."/>
            <person name="Murphy B."/>
            <person name="Murphy L."/>
            <person name="Muzny D.M."/>
            <person name="Nelson D.L."/>
            <person name="Nelson D.R."/>
            <person name="Nelson K.A."/>
            <person name="Nixon K."/>
            <person name="Nusskern D.R."/>
            <person name="Pacleb J.M."/>
            <person name="Palazzolo M."/>
            <person name="Pittman G.S."/>
            <person name="Pan S."/>
            <person name="Pollard J."/>
            <person name="Puri V."/>
            <person name="Reese M.G."/>
            <person name="Reinert K."/>
            <person name="Remington K."/>
            <person name="Saunders R.D.C."/>
            <person name="Scheeler F."/>
            <person name="Shen H."/>
            <person name="Shue B.C."/>
            <person name="Siden-Kiamos I."/>
            <person name="Simpson M."/>
            <person name="Skupski M.P."/>
            <person name="Smith T.J."/>
            <person name="Spier E."/>
            <person name="Spradling A.C."/>
            <person name="Stapleton M."/>
            <person name="Strong R."/>
            <person name="Sun E."/>
            <person name="Svirskas R."/>
            <person name="Tector C."/>
            <person name="Turner R."/>
            <person name="Venter E."/>
            <person name="Wang A.H."/>
            <person name="Wang X."/>
            <person name="Wang Z.-Y."/>
            <person name="Wassarman D.A."/>
            <person name="Weinstock G.M."/>
            <person name="Weissenbach J."/>
            <person name="Williams S.M."/>
            <person name="Woodage T."/>
            <person name="Worley K.C."/>
            <person name="Wu D."/>
            <person name="Yang S."/>
            <person name="Yao Q.A."/>
            <person name="Ye J."/>
            <person name="Yeh R.-F."/>
            <person name="Zaveri J.S."/>
            <person name="Zhan M."/>
            <person name="Zhang G."/>
            <person name="Zhao Q."/>
            <person name="Zheng L."/>
            <person name="Zheng X.H."/>
            <person name="Zhong F.N."/>
            <person name="Zhong W."/>
            <person name="Zhou X."/>
            <person name="Zhu S.C."/>
            <person name="Zhu X."/>
            <person name="Smith H.O."/>
            <person name="Gibbs R.A."/>
            <person name="Myers E.W."/>
            <person name="Rubin G.M."/>
            <person name="Venter J.C."/>
        </authorList>
    </citation>
    <scope>NUCLEOTIDE SEQUENCE [LARGE SCALE GENOMIC DNA]</scope>
    <source>
        <strain>Berkeley</strain>
    </source>
</reference>
<reference key="2">
    <citation type="journal article" date="2002" name="Genome Biol.">
        <title>Annotation of the Drosophila melanogaster euchromatic genome: a systematic review.</title>
        <authorList>
            <person name="Misra S."/>
            <person name="Crosby M.A."/>
            <person name="Mungall C.J."/>
            <person name="Matthews B.B."/>
            <person name="Campbell K.S."/>
            <person name="Hradecky P."/>
            <person name="Huang Y."/>
            <person name="Kaminker J.S."/>
            <person name="Millburn G.H."/>
            <person name="Prochnik S.E."/>
            <person name="Smith C.D."/>
            <person name="Tupy J.L."/>
            <person name="Whitfield E.J."/>
            <person name="Bayraktaroglu L."/>
            <person name="Berman B.P."/>
            <person name="Bettencourt B.R."/>
            <person name="Celniker S.E."/>
            <person name="de Grey A.D.N.J."/>
            <person name="Drysdale R.A."/>
            <person name="Harris N.L."/>
            <person name="Richter J."/>
            <person name="Russo S."/>
            <person name="Schroeder A.J."/>
            <person name="Shu S.Q."/>
            <person name="Stapleton M."/>
            <person name="Yamada C."/>
            <person name="Ashburner M."/>
            <person name="Gelbart W.M."/>
            <person name="Rubin G.M."/>
            <person name="Lewis S.E."/>
        </authorList>
    </citation>
    <scope>GENOME REANNOTATION</scope>
    <source>
        <strain>Berkeley</strain>
    </source>
</reference>
<reference key="3">
    <citation type="journal article" date="2002" name="Genome Biol.">
        <title>A Drosophila full-length cDNA resource.</title>
        <authorList>
            <person name="Stapleton M."/>
            <person name="Carlson J.W."/>
            <person name="Brokstein P."/>
            <person name="Yu C."/>
            <person name="Champe M."/>
            <person name="George R.A."/>
            <person name="Guarin H."/>
            <person name="Kronmiller B."/>
            <person name="Pacleb J.M."/>
            <person name="Park S."/>
            <person name="Wan K.H."/>
            <person name="Rubin G.M."/>
            <person name="Celniker S.E."/>
        </authorList>
    </citation>
    <scope>NUCLEOTIDE SEQUENCE [LARGE SCALE MRNA] (ISOFORM B)</scope>
    <scope>NUCLEOTIDE SEQUENCE [LARGE SCALE MRNA] OF 938-1866 (ISOFORMS C/D)</scope>
    <source>
        <strain>Berkeley</strain>
        <tissue>Embryo</tissue>
    </source>
</reference>
<reference key="4">
    <citation type="journal article" date="2008" name="J. Proteome Res.">
        <title>Phosphoproteome analysis of Drosophila melanogaster embryos.</title>
        <authorList>
            <person name="Zhai B."/>
            <person name="Villen J."/>
            <person name="Beausoleil S.A."/>
            <person name="Mintseris J."/>
            <person name="Gygi S.P."/>
        </authorList>
    </citation>
    <scope>PHOSPHORYLATION [LARGE SCALE ANALYSIS] AT SER-719</scope>
    <scope>IDENTIFICATION BY MASS SPECTROMETRY</scope>
    <source>
        <tissue>Embryo</tissue>
    </source>
</reference>
<reference key="5">
    <citation type="journal article" date="2012" name="Nat. Neurosci.">
        <title>Cooperation of Syd-1 with Neurexin synchronizes pre- with postsynaptic assembly.</title>
        <authorList>
            <person name="Owald D."/>
            <person name="Khorramshahi O."/>
            <person name="Gupta V.K."/>
            <person name="Banovic D."/>
            <person name="Depner H."/>
            <person name="Fouquet W."/>
            <person name="Wichmann C."/>
            <person name="Mertel S."/>
            <person name="Eimer S."/>
            <person name="Reynolds E."/>
            <person name="Holt M."/>
            <person name="Aberle H."/>
            <person name="Sigrist S.J."/>
        </authorList>
    </citation>
    <scope>FUNCTION</scope>
    <scope>INTERACTION WITH NRX-1</scope>
    <scope>SUBCELLULAR LOCATION</scope>
    <scope>DISRUPTION PHENOTYPE</scope>
    <scope>MUTAGENESIS OF ARG-185 AND LEU-190</scope>
</reference>
<accession>Q9V9S7</accession>
<accession>C3KGQ2</accession>
<accession>E1JJ30</accession>
<accession>E1JJ31</accession>
<accession>Q8SWW5</accession>
<protein>
    <recommendedName>
        <fullName>Rho GTPase-activating protein 100F</fullName>
        <shortName>RhoGAP-100F</shortName>
    </recommendedName>
    <alternativeName>
        <fullName>Synapse defective protein 1 homolog</fullName>
        <shortName>Protein syd-1 homolog</shortName>
    </alternativeName>
</protein>
<sequence length="1866" mass="198298">MQWKKKFTRLKAATGNSRVRRMLCCGRRKENGRSVPDVTASPGRAPPGPLPANQMPAMGNQQHHGNQQHHGNQQQHHGNQHSNHRGQSGSLSNAAGVKDPVMLQGDFRKVSGISSEIFRQIEAVENDHDPNTAAALEAVERRGEMIVRVLEPRCMGSKQAVDAAHKLMNKADARHTVQLVEIVKRPGQTLGLYIREGNGADRTDGVFISRIALESAVYNSGCLRVGDEILAVNLVDVTHMSLDDVVIIMSIPRRLVLAIRQRRGNRGTGSPGPPTLSRPEQKPPPVVVIKRDLRDEDLDETDRMPRPRSSRDRRTGDGREMTESRSRLGLGLNNYSPQSEQLDMYYNTRGGGGGAMGEPPNWGYKPPPPPSSVITEQPTKAHAFAPSHAYYQNAGTLESLAEKVHAFYPGQPGGPPVGPSRRMSTGTGNVGLAQQHARFPRSGSDQHLPRVEYSDYSNSLGRHSLLRSSLKPGTTGGAPMQVGVGGTLGRYGRYDQQRAGVSKYGPPSGGAQSLTRRSRPNLDYSSDTEATIGPRPSYYYYNRPAIGSMSRGSGGAGGGVGAASTAALLAGAADLNKFNSLPRERPGTRLQGIRSRMGDRLVDENDGNTSAPEFDVRRGRDLRQRITASPSIFTADEYRAWLRRAPSSSAIAEQMRMTRDMFAQPRAQRFSCSAENIHDALRNTESIYSSRNHILGTGTLDRNMGLTRPISALPVRSMSSQHIGGAGSIRSPSIRRMRQLLELSAGPASPSGSILSTGGHQSPAPTPSATLPRPHRQIDINPAEFAKYKLDKPIVDIGGISGMLWIHLLAGRGLRTAPEGAAGTATQGQTRDLYCVIECDRVHKARTVVRSGDLQFDWDESFELDLVGNKQLDVLVYSWDPQHRHKLCYRGAISLSSILRQSPLHQLALKVEPRGTIYIRMRHTDPLALYKRRGLPSLRAGYPTLFGADLETVVNRESKNAPGSAPVPIVLRRCVEEVERRGLDIIGLYRLCGSATKKRLLREAFERNSRAVELTPEHVPDINVITGVLKDYLRELPEPLFTRCLFQMTVDALAVCLPDDPEGNAKLMLSILDCLPRANRATLVFLLDHLSLVVSNSERNKMSAQALATVMGPPLMLHSASAQPGADIDHAQPIAVLKYLLQIWPQPQAQHQQMAQHMGGAAGAMMGGLVTAGSMSNMAGVASGRRGESTGQRGSKVSALPADRQQLLLQQQAQLMAAGNLLRSSTSVTNILSQGHPQLSATANNHLYQSVVGQLAQSHRALQQAVQQPYQLGGSVGSAIPDPSPLPLPGTPSPGSSSASTGSGSGSGKSTDTIKRGASPVSVKQVKIVDQPSSPYSIVMKKPPLQKDAPVEITTPTTQADTESTLGCKESNGTASRRGNVDFYDTHKTQAKSVVNEESSYSSKYTGSETKKIIPGNSSYTPSKANASGLSGGEDYKAMRNKSSATSSSSSSQATVLSAGSTATSAPTTSSDDSDDLVSYKSSASTNALLAQSQAMTTSQLMSKYLKREPRVQFTPIKSPESPSPPGSGDGLPKGTYQLVTPISGSSSKPGATTGAISKYTTGSVESSINANSQKLSSPSRLCNSKDSNSRTGTASSTTPATSMVSTGRRLFDSLASSSSSETETKTYIGGTTAASGAITTTIYTNDTKNSGSSSSKSGIGGGSGTGLGAVSGASSETRSFGSTLFGSSGLGNGNGSSHNHSSASPSPFTTTNGNGNHNTMHLYGTLPKNGTSTGAALFGGSANSSSYHSSASGSGAGTASSSGVSSMTGSTNSYDFYTSTSSTVSSSRPFANGGNNYHTLGTYRAQYAATNPFLDAFDEKPGSNGGNAHGEEKLGADKGHHRAAVMAFQSSGDSKNGSDEYDDIK</sequence>